<evidence type="ECO:0000255" key="1">
    <source>
        <dbReference type="HAMAP-Rule" id="MF_00693"/>
    </source>
</evidence>
<dbReference type="EMBL" id="AE000520">
    <property type="protein sequence ID" value="AAC65461.1"/>
    <property type="molecule type" value="Genomic_DNA"/>
</dbReference>
<dbReference type="PIR" id="H71318">
    <property type="entry name" value="H71318"/>
</dbReference>
<dbReference type="RefSeq" id="WP_010881923.1">
    <property type="nucleotide sequence ID" value="NC_021490.2"/>
</dbReference>
<dbReference type="SMR" id="O83487"/>
<dbReference type="IntAct" id="O83487">
    <property type="interactions" value="10"/>
</dbReference>
<dbReference type="STRING" id="243276.TP_0474"/>
<dbReference type="EnsemblBacteria" id="AAC65461">
    <property type="protein sequence ID" value="AAC65461"/>
    <property type="gene ID" value="TP_0474"/>
</dbReference>
<dbReference type="KEGG" id="tpa:TP_0474"/>
<dbReference type="KEGG" id="tpw:TPANIC_0474"/>
<dbReference type="eggNOG" id="COG0217">
    <property type="taxonomic scope" value="Bacteria"/>
</dbReference>
<dbReference type="HOGENOM" id="CLU_062974_2_2_12"/>
<dbReference type="OrthoDB" id="9781053at2"/>
<dbReference type="Proteomes" id="UP000000811">
    <property type="component" value="Chromosome"/>
</dbReference>
<dbReference type="GO" id="GO:0005829">
    <property type="term" value="C:cytosol"/>
    <property type="evidence" value="ECO:0007669"/>
    <property type="project" value="TreeGrafter"/>
</dbReference>
<dbReference type="GO" id="GO:0003677">
    <property type="term" value="F:DNA binding"/>
    <property type="evidence" value="ECO:0007669"/>
    <property type="project" value="UniProtKB-UniRule"/>
</dbReference>
<dbReference type="GO" id="GO:0006355">
    <property type="term" value="P:regulation of DNA-templated transcription"/>
    <property type="evidence" value="ECO:0007669"/>
    <property type="project" value="UniProtKB-UniRule"/>
</dbReference>
<dbReference type="FunFam" id="1.10.10.200:FF:000002">
    <property type="entry name" value="Probable transcriptional regulatory protein CLM62_37755"/>
    <property type="match status" value="1"/>
</dbReference>
<dbReference type="FunFam" id="3.30.70.980:FF:000002">
    <property type="entry name" value="Probable transcriptional regulatory protein YebC"/>
    <property type="match status" value="1"/>
</dbReference>
<dbReference type="Gene3D" id="1.10.10.200">
    <property type="match status" value="1"/>
</dbReference>
<dbReference type="Gene3D" id="3.30.70.980">
    <property type="match status" value="2"/>
</dbReference>
<dbReference type="HAMAP" id="MF_00693">
    <property type="entry name" value="Transcrip_reg_TACO1"/>
    <property type="match status" value="1"/>
</dbReference>
<dbReference type="InterPro" id="IPR017856">
    <property type="entry name" value="Integrase-like_N"/>
</dbReference>
<dbReference type="InterPro" id="IPR048300">
    <property type="entry name" value="TACO1_YebC-like_2nd/3rd_dom"/>
</dbReference>
<dbReference type="InterPro" id="IPR049083">
    <property type="entry name" value="TACO1_YebC_N"/>
</dbReference>
<dbReference type="InterPro" id="IPR002876">
    <property type="entry name" value="Transcrip_reg_TACO1-like"/>
</dbReference>
<dbReference type="InterPro" id="IPR026564">
    <property type="entry name" value="Transcrip_reg_TACO1-like_dom3"/>
</dbReference>
<dbReference type="InterPro" id="IPR029072">
    <property type="entry name" value="YebC-like"/>
</dbReference>
<dbReference type="NCBIfam" id="NF001030">
    <property type="entry name" value="PRK00110.1"/>
    <property type="match status" value="1"/>
</dbReference>
<dbReference type="NCBIfam" id="NF009044">
    <property type="entry name" value="PRK12378.1"/>
    <property type="match status" value="1"/>
</dbReference>
<dbReference type="NCBIfam" id="TIGR01033">
    <property type="entry name" value="YebC/PmpR family DNA-binding transcriptional regulator"/>
    <property type="match status" value="1"/>
</dbReference>
<dbReference type="PANTHER" id="PTHR12532:SF6">
    <property type="entry name" value="TRANSCRIPTIONAL REGULATORY PROTEIN YEBC-RELATED"/>
    <property type="match status" value="1"/>
</dbReference>
<dbReference type="PANTHER" id="PTHR12532">
    <property type="entry name" value="TRANSLATIONAL ACTIVATOR OF CYTOCHROME C OXIDASE 1"/>
    <property type="match status" value="1"/>
</dbReference>
<dbReference type="Pfam" id="PF20772">
    <property type="entry name" value="TACO1_YebC_N"/>
    <property type="match status" value="1"/>
</dbReference>
<dbReference type="Pfam" id="PF01709">
    <property type="entry name" value="Transcrip_reg"/>
    <property type="match status" value="1"/>
</dbReference>
<dbReference type="SUPFAM" id="SSF75625">
    <property type="entry name" value="YebC-like"/>
    <property type="match status" value="1"/>
</dbReference>
<name>Y474_TREPA</name>
<comment type="subcellular location">
    <subcellularLocation>
        <location evidence="1">Cytoplasm</location>
    </subcellularLocation>
</comment>
<comment type="similarity">
    <text evidence="1">Belongs to the TACO1 family.</text>
</comment>
<proteinExistence type="inferred from homology"/>
<gene>
    <name type="ordered locus">TP_0474</name>
</gene>
<keyword id="KW-0963">Cytoplasm</keyword>
<keyword id="KW-0238">DNA-binding</keyword>
<keyword id="KW-1185">Reference proteome</keyword>
<keyword id="KW-0804">Transcription</keyword>
<keyword id="KW-0805">Transcription regulation</keyword>
<protein>
    <recommendedName>
        <fullName evidence="1">Probable transcriptional regulatory protein TP_0474</fullName>
    </recommendedName>
</protein>
<organism>
    <name type="scientific">Treponema pallidum (strain Nichols)</name>
    <dbReference type="NCBI Taxonomy" id="243276"/>
    <lineage>
        <taxon>Bacteria</taxon>
        <taxon>Pseudomonadati</taxon>
        <taxon>Spirochaetota</taxon>
        <taxon>Spirochaetia</taxon>
        <taxon>Spirochaetales</taxon>
        <taxon>Treponemataceae</taxon>
        <taxon>Treponema</taxon>
    </lineage>
</organism>
<reference key="1">
    <citation type="journal article" date="1998" name="Science">
        <title>Complete genome sequence of Treponema pallidum, the syphilis spirochete.</title>
        <authorList>
            <person name="Fraser C.M."/>
            <person name="Norris S.J."/>
            <person name="Weinstock G.M."/>
            <person name="White O."/>
            <person name="Sutton G.G."/>
            <person name="Dodson R.J."/>
            <person name="Gwinn M.L."/>
            <person name="Hickey E.K."/>
            <person name="Clayton R.A."/>
            <person name="Ketchum K.A."/>
            <person name="Sodergren E."/>
            <person name="Hardham J.M."/>
            <person name="McLeod M.P."/>
            <person name="Salzberg S.L."/>
            <person name="Peterson J.D."/>
            <person name="Khalak H.G."/>
            <person name="Richardson D.L."/>
            <person name="Howell J.K."/>
            <person name="Chidambaram M."/>
            <person name="Utterback T.R."/>
            <person name="McDonald L.A."/>
            <person name="Artiach P."/>
            <person name="Bowman C."/>
            <person name="Cotton M.D."/>
            <person name="Fujii C."/>
            <person name="Garland S.A."/>
            <person name="Hatch B."/>
            <person name="Horst K."/>
            <person name="Roberts K.M."/>
            <person name="Sandusky M."/>
            <person name="Weidman J.F."/>
            <person name="Smith H.O."/>
            <person name="Venter J.C."/>
        </authorList>
    </citation>
    <scope>NUCLEOTIDE SEQUENCE [LARGE SCALE GENOMIC DNA]</scope>
    <source>
        <strain>Nichols</strain>
    </source>
</reference>
<feature type="chain" id="PRO_0000175922" description="Probable transcriptional regulatory protein TP_0474">
    <location>
        <begin position="1"/>
        <end position="245"/>
    </location>
</feature>
<accession>O83487</accession>
<sequence length="245" mass="26326">MSGHSKWATIKHAKGAADAKRGQLFTKFIKEISVAARMAGGDPQANPRLRTAILKARAANMPKDNIERAIKKGTGELSGSSYEELVYEGYAPGGVAVLVEVLTDNKNRAAANVRNLFSRNGGNLGSAGSVSYMFNRKGVIEYDSEQVDEEALMELALEAGAEDIQNAGGVLTVTTVPGTFETVLESLQAKGWESLSAGISMVPDTYLALDEETARKVLKMIDRLEEEEDVQAVYSNADIPSELVL</sequence>